<name>RBFA_STAA8</name>
<feature type="chain" id="PRO_1000000221" description="Ribosome-binding factor A">
    <location>
        <begin position="1"/>
        <end position="116"/>
    </location>
</feature>
<feature type="helix" evidence="2">
    <location>
        <begin position="4"/>
        <end position="24"/>
    </location>
</feature>
<feature type="strand" evidence="3">
    <location>
        <begin position="27"/>
        <end position="29"/>
    </location>
</feature>
<feature type="strand" evidence="2">
    <location>
        <begin position="34"/>
        <end position="40"/>
    </location>
</feature>
<feature type="strand" evidence="2">
    <location>
        <begin position="46"/>
        <end position="52"/>
    </location>
</feature>
<feature type="helix" evidence="2">
    <location>
        <begin position="57"/>
        <end position="69"/>
    </location>
</feature>
<feature type="helix" evidence="2">
    <location>
        <begin position="71"/>
        <end position="79"/>
    </location>
</feature>
<feature type="strand" evidence="2">
    <location>
        <begin position="89"/>
        <end position="94"/>
    </location>
</feature>
<feature type="helix" evidence="3">
    <location>
        <begin position="97"/>
        <end position="104"/>
    </location>
</feature>
<feature type="turn" evidence="3">
    <location>
        <begin position="105"/>
        <end position="107"/>
    </location>
</feature>
<feature type="helix" evidence="3">
    <location>
        <begin position="108"/>
        <end position="115"/>
    </location>
</feature>
<sequence>MSSMRAERVGEQMKKELMDIINNKVKDPRVGFITITDVVLTNDLSQAKVFLTVLGNDKEVENTFKALDKAKGFIKSELGSRMRLRIMPELMYEYDQSIEYGNKIERMIQDLHKQDR</sequence>
<dbReference type="EMBL" id="CP000253">
    <property type="protein sequence ID" value="ABD30348.1"/>
    <property type="molecule type" value="Genomic_DNA"/>
</dbReference>
<dbReference type="RefSeq" id="WP_000097322.1">
    <property type="nucleotide sequence ID" value="NZ_LS483365.1"/>
</dbReference>
<dbReference type="RefSeq" id="YP_499780.1">
    <property type="nucleotide sequence ID" value="NC_007795.1"/>
</dbReference>
<dbReference type="PDB" id="6YE5">
    <property type="method" value="NMR"/>
    <property type="chains" value="A=2-116"/>
</dbReference>
<dbReference type="PDB" id="8BXA">
    <property type="method" value="X-ray"/>
    <property type="resolution" value="2.22 A"/>
    <property type="chains" value="A=1-116"/>
</dbReference>
<dbReference type="PDB" id="8BYV">
    <property type="method" value="EM"/>
    <property type="resolution" value="2.89 A"/>
    <property type="chains" value="A=1-116"/>
</dbReference>
<dbReference type="PDBsum" id="6YE5"/>
<dbReference type="PDBsum" id="8BXA"/>
<dbReference type="PDBsum" id="8BYV"/>
<dbReference type="EMDB" id="EMD-16334"/>
<dbReference type="SMR" id="Q2G2Q4"/>
<dbReference type="STRING" id="93061.SAOUHSC_01247"/>
<dbReference type="PaxDb" id="1280-SAXN108_1274"/>
<dbReference type="GeneID" id="3919978"/>
<dbReference type="KEGG" id="sao:SAOUHSC_01247"/>
<dbReference type="PATRIC" id="fig|93061.5.peg.1141"/>
<dbReference type="eggNOG" id="COG0858">
    <property type="taxonomic scope" value="Bacteria"/>
</dbReference>
<dbReference type="HOGENOM" id="CLU_089475_6_3_9"/>
<dbReference type="OrthoDB" id="307788at2"/>
<dbReference type="PRO" id="PR:Q2G2Q4"/>
<dbReference type="Proteomes" id="UP000008816">
    <property type="component" value="Chromosome"/>
</dbReference>
<dbReference type="GO" id="GO:0005829">
    <property type="term" value="C:cytosol"/>
    <property type="evidence" value="ECO:0000318"/>
    <property type="project" value="GO_Central"/>
</dbReference>
<dbReference type="GO" id="GO:0043024">
    <property type="term" value="F:ribosomal small subunit binding"/>
    <property type="evidence" value="ECO:0000318"/>
    <property type="project" value="GO_Central"/>
</dbReference>
<dbReference type="GO" id="GO:0030490">
    <property type="term" value="P:maturation of SSU-rRNA"/>
    <property type="evidence" value="ECO:0007669"/>
    <property type="project" value="UniProtKB-UniRule"/>
</dbReference>
<dbReference type="GO" id="GO:0042254">
    <property type="term" value="P:ribosome biogenesis"/>
    <property type="evidence" value="ECO:0000318"/>
    <property type="project" value="GO_Central"/>
</dbReference>
<dbReference type="FunFam" id="3.30.300.20:FF:000009">
    <property type="entry name" value="Ribosome-binding factor A"/>
    <property type="match status" value="1"/>
</dbReference>
<dbReference type="Gene3D" id="3.30.300.20">
    <property type="match status" value="1"/>
</dbReference>
<dbReference type="HAMAP" id="MF_00003">
    <property type="entry name" value="RbfA"/>
    <property type="match status" value="1"/>
</dbReference>
<dbReference type="InterPro" id="IPR015946">
    <property type="entry name" value="KH_dom-like_a/b"/>
</dbReference>
<dbReference type="InterPro" id="IPR000238">
    <property type="entry name" value="RbfA"/>
</dbReference>
<dbReference type="InterPro" id="IPR023799">
    <property type="entry name" value="RbfA_dom_sf"/>
</dbReference>
<dbReference type="InterPro" id="IPR020053">
    <property type="entry name" value="Ribosome-bd_factorA_CS"/>
</dbReference>
<dbReference type="NCBIfam" id="TIGR00082">
    <property type="entry name" value="rbfA"/>
    <property type="match status" value="1"/>
</dbReference>
<dbReference type="PANTHER" id="PTHR33515">
    <property type="entry name" value="RIBOSOME-BINDING FACTOR A, CHLOROPLASTIC-RELATED"/>
    <property type="match status" value="1"/>
</dbReference>
<dbReference type="PANTHER" id="PTHR33515:SF1">
    <property type="entry name" value="RIBOSOME-BINDING FACTOR A, CHLOROPLASTIC-RELATED"/>
    <property type="match status" value="1"/>
</dbReference>
<dbReference type="Pfam" id="PF02033">
    <property type="entry name" value="RBFA"/>
    <property type="match status" value="1"/>
</dbReference>
<dbReference type="SUPFAM" id="SSF89919">
    <property type="entry name" value="Ribosome-binding factor A, RbfA"/>
    <property type="match status" value="1"/>
</dbReference>
<dbReference type="PROSITE" id="PS01319">
    <property type="entry name" value="RBFA"/>
    <property type="match status" value="1"/>
</dbReference>
<accession>Q2G2Q4</accession>
<keyword id="KW-0002">3D-structure</keyword>
<keyword id="KW-0963">Cytoplasm</keyword>
<keyword id="KW-1185">Reference proteome</keyword>
<keyword id="KW-0690">Ribosome biogenesis</keyword>
<proteinExistence type="evidence at protein level"/>
<protein>
    <recommendedName>
        <fullName evidence="1">Ribosome-binding factor A</fullName>
    </recommendedName>
</protein>
<comment type="function">
    <text evidence="1">One of several proteins that assist in the late maturation steps of the functional core of the 30S ribosomal subunit. Associates with free 30S ribosomal subunits (but not with 30S subunits that are part of 70S ribosomes or polysomes). Required for efficient processing of 16S rRNA. May interact with the 5'-terminal helix region of 16S rRNA.</text>
</comment>
<comment type="subunit">
    <text evidence="1">Monomer. Binds 30S ribosomal subunits, but not 50S ribosomal subunits or 70S ribosomes.</text>
</comment>
<comment type="subcellular location">
    <subcellularLocation>
        <location evidence="1">Cytoplasm</location>
    </subcellularLocation>
</comment>
<comment type="similarity">
    <text evidence="1">Belongs to the RbfA family.</text>
</comment>
<evidence type="ECO:0000255" key="1">
    <source>
        <dbReference type="HAMAP-Rule" id="MF_00003"/>
    </source>
</evidence>
<evidence type="ECO:0007829" key="2">
    <source>
        <dbReference type="PDB" id="8BXA"/>
    </source>
</evidence>
<evidence type="ECO:0007829" key="3">
    <source>
        <dbReference type="PDB" id="8BYV"/>
    </source>
</evidence>
<gene>
    <name evidence="1" type="primary">rbfA</name>
    <name type="ordered locus">SAOUHSC_01247</name>
</gene>
<reference key="1">
    <citation type="book" date="2006" name="Gram positive pathogens, 2nd edition">
        <title>The Staphylococcus aureus NCTC 8325 genome.</title>
        <editorList>
            <person name="Fischetti V."/>
            <person name="Novick R."/>
            <person name="Ferretti J."/>
            <person name="Portnoy D."/>
            <person name="Rood J."/>
        </editorList>
        <authorList>
            <person name="Gillaspy A.F."/>
            <person name="Worrell V."/>
            <person name="Orvis J."/>
            <person name="Roe B.A."/>
            <person name="Dyer D.W."/>
            <person name="Iandolo J.J."/>
        </authorList>
    </citation>
    <scope>NUCLEOTIDE SEQUENCE [LARGE SCALE GENOMIC DNA]</scope>
    <source>
        <strain>NCTC 8325 / PS 47</strain>
    </source>
</reference>
<organism>
    <name type="scientific">Staphylococcus aureus (strain NCTC 8325 / PS 47)</name>
    <dbReference type="NCBI Taxonomy" id="93061"/>
    <lineage>
        <taxon>Bacteria</taxon>
        <taxon>Bacillati</taxon>
        <taxon>Bacillota</taxon>
        <taxon>Bacilli</taxon>
        <taxon>Bacillales</taxon>
        <taxon>Staphylococcaceae</taxon>
        <taxon>Staphylococcus</taxon>
    </lineage>
</organism>